<comment type="function">
    <text evidence="1">NDH-1 shuttles electrons from NADH, via FMN and iron-sulfur (Fe-S) centers, to quinones in the respiratory chain. The immediate electron acceptor for the enzyme in this species is believed to be a menaquinone. Couples the redox reaction to proton translocation (for every two electrons transferred, four hydrogen ions are translocated across the cytoplasmic membrane), and thus conserves the redox energy in a proton gradient.</text>
</comment>
<comment type="catalytic activity">
    <reaction evidence="1">
        <text>a quinone + NADH + 5 H(+)(in) = a quinol + NAD(+) + 4 H(+)(out)</text>
        <dbReference type="Rhea" id="RHEA:57888"/>
        <dbReference type="ChEBI" id="CHEBI:15378"/>
        <dbReference type="ChEBI" id="CHEBI:24646"/>
        <dbReference type="ChEBI" id="CHEBI:57540"/>
        <dbReference type="ChEBI" id="CHEBI:57945"/>
        <dbReference type="ChEBI" id="CHEBI:132124"/>
    </reaction>
</comment>
<comment type="subunit">
    <text evidence="1">NDH-1 is composed of 14 different subunits. Subunits NuoB, C, D, E, F, and G constitute the peripheral sector of the complex.</text>
</comment>
<comment type="subcellular location">
    <subcellularLocation>
        <location evidence="1">Cell membrane</location>
        <topology evidence="1">Peripheral membrane protein</topology>
        <orientation evidence="1">Cytoplasmic side</orientation>
    </subcellularLocation>
</comment>
<comment type="similarity">
    <text evidence="1">Belongs to the complex I 49 kDa subunit family.</text>
</comment>
<evidence type="ECO:0000255" key="1">
    <source>
        <dbReference type="HAMAP-Rule" id="MF_01358"/>
    </source>
</evidence>
<proteinExistence type="inferred from homology"/>
<dbReference type="EC" id="7.1.1.-" evidence="1"/>
<dbReference type="EMBL" id="AP006840">
    <property type="protein sequence ID" value="BAD40574.1"/>
    <property type="molecule type" value="Genomic_DNA"/>
</dbReference>
<dbReference type="SMR" id="Q67P19"/>
<dbReference type="STRING" id="292459.STH1589"/>
<dbReference type="KEGG" id="sth:STH1589"/>
<dbReference type="eggNOG" id="COG0649">
    <property type="taxonomic scope" value="Bacteria"/>
</dbReference>
<dbReference type="HOGENOM" id="CLU_015134_1_2_9"/>
<dbReference type="OrthoDB" id="9801496at2"/>
<dbReference type="Proteomes" id="UP000000417">
    <property type="component" value="Chromosome"/>
</dbReference>
<dbReference type="GO" id="GO:0005886">
    <property type="term" value="C:plasma membrane"/>
    <property type="evidence" value="ECO:0007669"/>
    <property type="project" value="UniProtKB-SubCell"/>
</dbReference>
<dbReference type="GO" id="GO:0051287">
    <property type="term" value="F:NAD binding"/>
    <property type="evidence" value="ECO:0007669"/>
    <property type="project" value="InterPro"/>
</dbReference>
<dbReference type="GO" id="GO:0050136">
    <property type="term" value="F:NADH:ubiquinone reductase (non-electrogenic) activity"/>
    <property type="evidence" value="ECO:0007669"/>
    <property type="project" value="UniProtKB-UniRule"/>
</dbReference>
<dbReference type="GO" id="GO:0048038">
    <property type="term" value="F:quinone binding"/>
    <property type="evidence" value="ECO:0007669"/>
    <property type="project" value="UniProtKB-KW"/>
</dbReference>
<dbReference type="Gene3D" id="1.10.645.10">
    <property type="entry name" value="Cytochrome-c3 Hydrogenase, chain B"/>
    <property type="match status" value="1"/>
</dbReference>
<dbReference type="HAMAP" id="MF_01358">
    <property type="entry name" value="NDH1_NuoD"/>
    <property type="match status" value="1"/>
</dbReference>
<dbReference type="InterPro" id="IPR001135">
    <property type="entry name" value="NADH_Q_OxRdtase_suD"/>
</dbReference>
<dbReference type="InterPro" id="IPR022885">
    <property type="entry name" value="NDH1_su_D/H"/>
</dbReference>
<dbReference type="InterPro" id="IPR029014">
    <property type="entry name" value="NiFe-Hase_large"/>
</dbReference>
<dbReference type="NCBIfam" id="TIGR01962">
    <property type="entry name" value="NuoD"/>
    <property type="match status" value="1"/>
</dbReference>
<dbReference type="NCBIfam" id="NF004739">
    <property type="entry name" value="PRK06075.1"/>
    <property type="match status" value="1"/>
</dbReference>
<dbReference type="PANTHER" id="PTHR11993:SF10">
    <property type="entry name" value="NADH DEHYDROGENASE [UBIQUINONE] IRON-SULFUR PROTEIN 2, MITOCHONDRIAL"/>
    <property type="match status" value="1"/>
</dbReference>
<dbReference type="PANTHER" id="PTHR11993">
    <property type="entry name" value="NADH-UBIQUINONE OXIDOREDUCTASE 49 KDA SUBUNIT"/>
    <property type="match status" value="1"/>
</dbReference>
<dbReference type="Pfam" id="PF00346">
    <property type="entry name" value="Complex1_49kDa"/>
    <property type="match status" value="1"/>
</dbReference>
<dbReference type="SUPFAM" id="SSF56762">
    <property type="entry name" value="HydB/Nqo4-like"/>
    <property type="match status" value="1"/>
</dbReference>
<protein>
    <recommendedName>
        <fullName evidence="1">NADH-quinone oxidoreductase subunit D 1</fullName>
        <ecNumber evidence="1">7.1.1.-</ecNumber>
    </recommendedName>
    <alternativeName>
        <fullName evidence="1">NADH dehydrogenase I subunit D 1</fullName>
    </alternativeName>
    <alternativeName>
        <fullName evidence="1">NDH-1 subunit D 1</fullName>
    </alternativeName>
</protein>
<name>NUOD1_SYMTH</name>
<accession>Q67P19</accession>
<reference key="1">
    <citation type="journal article" date="2004" name="Nucleic Acids Res.">
        <title>Genome sequence of Symbiobacterium thermophilum, an uncultivable bacterium that depends on microbial commensalism.</title>
        <authorList>
            <person name="Ueda K."/>
            <person name="Yamashita A."/>
            <person name="Ishikawa J."/>
            <person name="Shimada M."/>
            <person name="Watsuji T."/>
            <person name="Morimura K."/>
            <person name="Ikeda H."/>
            <person name="Hattori M."/>
            <person name="Beppu T."/>
        </authorList>
    </citation>
    <scope>NUCLEOTIDE SEQUENCE [LARGE SCALE GENOMIC DNA]</scope>
    <source>
        <strain>DSM 24528 / JCM 14929 / IAM 14863 / T</strain>
    </source>
</reference>
<sequence length="404" mass="45942">MSMAEDLHLEEQRPERMTLSIGPHHPATHGVLRVKLELEGETVVKAEPETGFLHTGIEKTAEHLTWNQATTVMDRMDYLSPISNNTGYVMAVEKLLGIEDRIPEKARVTRVILLELNRVASHLVGLGTGGLDYGNIGTPIFWAFELRDRILDIFEHTTGQRMNPSYMRVGGLAYDLPHNFKEMVEDFLKVAPGRIQELKDVMLHNPIFVDRAKGVSVITYEQALRYGLTGRNLRVTGSDYDVRKYYPYLGYENYDFKVPVYTDGDSWSRVAITFDEMFESLKIIRQALDNLPWDDRYIIDDRKLVLPPKQEVKHSMEALIHHFKLVHHGFDVPAGEVYVSIESPRGEIGFYVVSDGGNKPMRVRVRPPSFYAVYSLPVLLEGHLLSDMVGAIATIDPVFGEVDR</sequence>
<gene>
    <name evidence="1" type="primary">nuoD1</name>
    <name type="ordered locus">STH1589</name>
</gene>
<organism>
    <name type="scientific">Symbiobacterium thermophilum (strain DSM 24528 / JCM 14929 / IAM 14863 / T)</name>
    <dbReference type="NCBI Taxonomy" id="292459"/>
    <lineage>
        <taxon>Bacteria</taxon>
        <taxon>Bacillati</taxon>
        <taxon>Bacillota</taxon>
        <taxon>Clostridia</taxon>
        <taxon>Eubacteriales</taxon>
        <taxon>Symbiobacteriaceae</taxon>
        <taxon>Symbiobacterium</taxon>
    </lineage>
</organism>
<feature type="chain" id="PRO_0000357943" description="NADH-quinone oxidoreductase subunit D 1">
    <location>
        <begin position="1"/>
        <end position="404"/>
    </location>
</feature>
<keyword id="KW-1003">Cell membrane</keyword>
<keyword id="KW-0472">Membrane</keyword>
<keyword id="KW-0520">NAD</keyword>
<keyword id="KW-0874">Quinone</keyword>
<keyword id="KW-1185">Reference proteome</keyword>
<keyword id="KW-1278">Translocase</keyword>
<keyword id="KW-0813">Transport</keyword>